<evidence type="ECO:0000250" key="1"/>
<evidence type="ECO:0000255" key="2">
    <source>
        <dbReference type="PROSITE-ProRule" id="PRU00805"/>
    </source>
</evidence>
<evidence type="ECO:0000305" key="3"/>
<evidence type="ECO:0000305" key="4">
    <source>
    </source>
</evidence>
<comment type="function">
    <text evidence="1">Simultaneously catalyzes two reactions, namely formation of ethylene and of succinate from 2-oxoglutarate.</text>
</comment>
<comment type="catalytic activity">
    <reaction>
        <text>2-oxoglutarate + O2 + 2 H(+) = ethene + 3 CO2 + H2O</text>
        <dbReference type="Rhea" id="RHEA:31523"/>
        <dbReference type="ChEBI" id="CHEBI:15377"/>
        <dbReference type="ChEBI" id="CHEBI:15378"/>
        <dbReference type="ChEBI" id="CHEBI:15379"/>
        <dbReference type="ChEBI" id="CHEBI:16526"/>
        <dbReference type="ChEBI" id="CHEBI:16810"/>
        <dbReference type="ChEBI" id="CHEBI:18153"/>
        <dbReference type="EC" id="1.13.12.19"/>
    </reaction>
</comment>
<comment type="catalytic activity">
    <reaction>
        <text>L-arginine + 2-oxoglutarate + O2 = guanidine + L-glutamate 5-semialdehyde + succinate + CO2</text>
        <dbReference type="Rhea" id="RHEA:31535"/>
        <dbReference type="ChEBI" id="CHEBI:15379"/>
        <dbReference type="ChEBI" id="CHEBI:16526"/>
        <dbReference type="ChEBI" id="CHEBI:16810"/>
        <dbReference type="ChEBI" id="CHEBI:30031"/>
        <dbReference type="ChEBI" id="CHEBI:30087"/>
        <dbReference type="ChEBI" id="CHEBI:32682"/>
        <dbReference type="ChEBI" id="CHEBI:58066"/>
        <dbReference type="EC" id="1.14.20.7"/>
    </reaction>
</comment>
<comment type="cofactor">
    <cofactor evidence="1">
        <name>Fe(2+)</name>
        <dbReference type="ChEBI" id="CHEBI:29033"/>
    </cofactor>
</comment>
<comment type="pathway">
    <text>Alkene biosynthesis; ethylene biosynthesis via 2-oxoglutarate.</text>
</comment>
<comment type="subunit">
    <text evidence="1">Monomer.</text>
</comment>
<comment type="miscellaneous">
    <text>A dual-circuit mechanism has been proposed in P.syringae pv phaseolicola for the complete reaction, in which the binding of L-arginine and 2-oxoglutarate in a Schiff-base structure generates a common intermediate for the two reactions.</text>
</comment>
<comment type="miscellaneous">
    <text evidence="3 4">Encoded on an unnamed plasmid.</text>
</comment>
<comment type="similarity">
    <text evidence="3">Belongs to the iron/ascorbate-dependent oxidoreductase family.</text>
</comment>
<geneLocation type="plasmid"/>
<reference key="1">
    <citation type="journal article" date="1999" name="Phytopathology">
        <title>Comparison of ethylene production by Pseudomonas syringae and Ralstonia solanacearum.</title>
        <authorList>
            <person name="Weingart H."/>
            <person name="Voelksch B."/>
            <person name="Ullrich M.S."/>
        </authorList>
        <dbReference type="AGRICOLA" id="IND22019584"/>
    </citation>
    <scope>NUCLEOTIDE SEQUENCE [GENOMIC DNA]</scope>
    <source>
        <strain>GSPB 1206</strain>
    </source>
</reference>
<organism>
    <name type="scientific">Pseudomonas syringae pv. pisi</name>
    <dbReference type="NCBI Taxonomy" id="59510"/>
    <lineage>
        <taxon>Bacteria</taxon>
        <taxon>Pseudomonadati</taxon>
        <taxon>Pseudomonadota</taxon>
        <taxon>Gammaproteobacteria</taxon>
        <taxon>Pseudomonadales</taxon>
        <taxon>Pseudomonadaceae</taxon>
        <taxon>Pseudomonas</taxon>
        <taxon>Pseudomonas syringae</taxon>
    </lineage>
</organism>
<proteinExistence type="inferred from homology"/>
<feature type="chain" id="PRO_0000067278" description="2-oxoglutarate-dependent ethylene/succinate-forming enzyme">
    <location>
        <begin position="1"/>
        <end position="337"/>
    </location>
</feature>
<feature type="domain" description="Fe2OG dioxygenase" evidence="2">
    <location>
        <begin position="166"/>
        <end position="286"/>
    </location>
</feature>
<feature type="binding site" evidence="2">
    <location>
        <position position="189"/>
    </location>
    <ligand>
        <name>Fe cation</name>
        <dbReference type="ChEBI" id="CHEBI:24875"/>
    </ligand>
</feature>
<feature type="binding site" evidence="2">
    <location>
        <position position="268"/>
    </location>
    <ligand>
        <name>Fe cation</name>
        <dbReference type="ChEBI" id="CHEBI:24875"/>
    </ligand>
</feature>
<protein>
    <recommendedName>
        <fullName>2-oxoglutarate-dependent ethylene/succinate-forming enzyme</fullName>
        <shortName>EFE</shortName>
        <shortName>Ethylene-forming enzyme</shortName>
        <ecNumber>1.13.12.19</ecNumber>
        <ecNumber>1.14.20.7</ecNumber>
    </recommendedName>
    <alternativeName>
        <fullName>2-oxoglutarate dioxygenase (ethylene-forming)</fullName>
    </alternativeName>
    <alternativeName>
        <fullName>2-oxoglutarate/L-arginine monooxygenase/decarboxylase (succinate-forming)</fullName>
    </alternativeName>
</protein>
<gene>
    <name type="primary">efe</name>
</gene>
<accession>Q9Z3T0</accession>
<sequence length="337" mass="38064">MTNLQTFELPTEVIGSAADISLGRALIQAWQKDGILQIKTDSEQNRKTQEAMAASKQFCKEPLTFKSSCVSDLTYSGYVASGEEVTAGKPDFPEIFTVCKDLPVSDQRVKAGWPCHGPVPWPNNTYQKSMKAFMGELGLAGERLLKLTALGFELPINTFTDLTRNGWHHMRVLRFPPQTSTMSSGIGAHTDYGLLVIAAQDDVGGLYIRPPVEGEKRNRNWLPGESSAGMFEHDDPWTYVTPVQNVWTVFPGDILQFMTCGQLLSTPHKVRLNTRERFACAYFHEPNFEACAYQVFEPSGNERIHYGEHFTSMFMRCYPDRITTKRIHKDNRLAHFK</sequence>
<keyword id="KW-0223">Dioxygenase</keyword>
<keyword id="KW-0266">Ethylene biosynthesis</keyword>
<keyword id="KW-0408">Iron</keyword>
<keyword id="KW-0479">Metal-binding</keyword>
<keyword id="KW-0560">Oxidoreductase</keyword>
<keyword id="KW-0614">Plasmid</keyword>
<dbReference type="EC" id="1.13.12.19"/>
<dbReference type="EC" id="1.14.20.7"/>
<dbReference type="EMBL" id="AF101061">
    <property type="protein sequence ID" value="AAD16443.1"/>
    <property type="molecule type" value="Genomic_DNA"/>
</dbReference>
<dbReference type="SMR" id="Q9Z3T0"/>
<dbReference type="BRENDA" id="1.13.12.19">
    <property type="organism ID" value="15409"/>
</dbReference>
<dbReference type="UniPathway" id="UPA00385"/>
<dbReference type="GO" id="GO:0102276">
    <property type="term" value="F:2-oxoglutarate oxygenase/decarboxylase (ethylene-forming) activity"/>
    <property type="evidence" value="ECO:0007669"/>
    <property type="project" value="UniProtKB-EC"/>
</dbReference>
<dbReference type="GO" id="GO:0051213">
    <property type="term" value="F:dioxygenase activity"/>
    <property type="evidence" value="ECO:0007669"/>
    <property type="project" value="UniProtKB-KW"/>
</dbReference>
<dbReference type="GO" id="GO:0046872">
    <property type="term" value="F:metal ion binding"/>
    <property type="evidence" value="ECO:0007669"/>
    <property type="project" value="UniProtKB-KW"/>
</dbReference>
<dbReference type="GO" id="GO:0009693">
    <property type="term" value="P:ethylene biosynthetic process"/>
    <property type="evidence" value="ECO:0007669"/>
    <property type="project" value="UniProtKB-UniPathway"/>
</dbReference>
<dbReference type="Gene3D" id="2.60.120.330">
    <property type="entry name" value="B-lactam Antibiotic, Isopenicillin N Synthase, Chain"/>
    <property type="match status" value="1"/>
</dbReference>
<dbReference type="InterPro" id="IPR026992">
    <property type="entry name" value="DIOX_N"/>
</dbReference>
<dbReference type="InterPro" id="IPR044861">
    <property type="entry name" value="IPNS-like_FE2OG_OXY"/>
</dbReference>
<dbReference type="InterPro" id="IPR027443">
    <property type="entry name" value="IPNS-like_sf"/>
</dbReference>
<dbReference type="InterPro" id="IPR050231">
    <property type="entry name" value="Iron_ascorbate_oxido_reductase"/>
</dbReference>
<dbReference type="InterPro" id="IPR005123">
    <property type="entry name" value="Oxoglu/Fe-dep_dioxygenase_dom"/>
</dbReference>
<dbReference type="PANTHER" id="PTHR47990">
    <property type="entry name" value="2-OXOGLUTARATE (2OG) AND FE(II)-DEPENDENT OXYGENASE SUPERFAMILY PROTEIN-RELATED"/>
    <property type="match status" value="1"/>
</dbReference>
<dbReference type="Pfam" id="PF03171">
    <property type="entry name" value="2OG-FeII_Oxy"/>
    <property type="match status" value="1"/>
</dbReference>
<dbReference type="Pfam" id="PF14226">
    <property type="entry name" value="DIOX_N"/>
    <property type="match status" value="1"/>
</dbReference>
<dbReference type="SUPFAM" id="SSF51197">
    <property type="entry name" value="Clavaminate synthase-like"/>
    <property type="match status" value="1"/>
</dbReference>
<dbReference type="PROSITE" id="PS51471">
    <property type="entry name" value="FE2OG_OXY"/>
    <property type="match status" value="1"/>
</dbReference>
<name>EFE_PSESJ</name>